<proteinExistence type="inferred from homology"/>
<accession>A5CRX5</accession>
<keyword id="KW-0028">Amino-acid biosynthesis</keyword>
<keyword id="KW-0055">Arginine biosynthesis</keyword>
<keyword id="KW-0067">ATP-binding</keyword>
<keyword id="KW-0436">Ligase</keyword>
<keyword id="KW-0460">Magnesium</keyword>
<keyword id="KW-0464">Manganese</keyword>
<keyword id="KW-0479">Metal-binding</keyword>
<keyword id="KW-0547">Nucleotide-binding</keyword>
<keyword id="KW-0665">Pyrimidine biosynthesis</keyword>
<keyword id="KW-0677">Repeat</keyword>
<name>CARB_CLAM3</name>
<reference key="1">
    <citation type="journal article" date="2008" name="J. Bacteriol.">
        <title>The genome sequence of the tomato-pathogenic actinomycete Clavibacter michiganensis subsp. michiganensis NCPPB382 reveals a large island involved in pathogenicity.</title>
        <authorList>
            <person name="Gartemann K.-H."/>
            <person name="Abt B."/>
            <person name="Bekel T."/>
            <person name="Burger A."/>
            <person name="Engemann J."/>
            <person name="Fluegel M."/>
            <person name="Gaigalat L."/>
            <person name="Goesmann A."/>
            <person name="Graefen I."/>
            <person name="Kalinowski J."/>
            <person name="Kaup O."/>
            <person name="Kirchner O."/>
            <person name="Krause L."/>
            <person name="Linke B."/>
            <person name="McHardy A."/>
            <person name="Meyer F."/>
            <person name="Pohle S."/>
            <person name="Rueckert C."/>
            <person name="Schneiker S."/>
            <person name="Zellermann E.-M."/>
            <person name="Puehler A."/>
            <person name="Eichenlaub R."/>
            <person name="Kaiser O."/>
            <person name="Bartels D."/>
        </authorList>
    </citation>
    <scope>NUCLEOTIDE SEQUENCE [LARGE SCALE GENOMIC DNA]</scope>
    <source>
        <strain>NCPPB 382</strain>
    </source>
</reference>
<gene>
    <name evidence="1" type="primary">carB</name>
    <name type="ordered locus">CMM_1782</name>
</gene>
<feature type="chain" id="PRO_1000066344" description="Carbamoyl phosphate synthase large chain">
    <location>
        <begin position="1"/>
        <end position="1096"/>
    </location>
</feature>
<feature type="domain" description="ATP-grasp 1" evidence="1">
    <location>
        <begin position="133"/>
        <end position="328"/>
    </location>
</feature>
<feature type="domain" description="ATP-grasp 2" evidence="1">
    <location>
        <begin position="676"/>
        <end position="870"/>
    </location>
</feature>
<feature type="domain" description="MGS-like" evidence="1">
    <location>
        <begin position="951"/>
        <end position="1095"/>
    </location>
</feature>
<feature type="region of interest" description="Carboxyphosphate synthetic domain" evidence="1">
    <location>
        <begin position="1"/>
        <end position="402"/>
    </location>
</feature>
<feature type="region of interest" description="Oligomerization domain" evidence="1">
    <location>
        <begin position="403"/>
        <end position="547"/>
    </location>
</feature>
<feature type="region of interest" description="Carbamoyl phosphate synthetic domain" evidence="1">
    <location>
        <begin position="548"/>
        <end position="950"/>
    </location>
</feature>
<feature type="region of interest" description="Allosteric domain" evidence="1">
    <location>
        <begin position="951"/>
        <end position="1096"/>
    </location>
</feature>
<feature type="binding site" evidence="1">
    <location>
        <position position="129"/>
    </location>
    <ligand>
        <name>ATP</name>
        <dbReference type="ChEBI" id="CHEBI:30616"/>
        <label>1</label>
    </ligand>
</feature>
<feature type="binding site" evidence="1">
    <location>
        <position position="169"/>
    </location>
    <ligand>
        <name>ATP</name>
        <dbReference type="ChEBI" id="CHEBI:30616"/>
        <label>1</label>
    </ligand>
</feature>
<feature type="binding site" evidence="1">
    <location>
        <position position="175"/>
    </location>
    <ligand>
        <name>ATP</name>
        <dbReference type="ChEBI" id="CHEBI:30616"/>
        <label>1</label>
    </ligand>
</feature>
<feature type="binding site" evidence="1">
    <location>
        <position position="176"/>
    </location>
    <ligand>
        <name>ATP</name>
        <dbReference type="ChEBI" id="CHEBI:30616"/>
        <label>1</label>
    </ligand>
</feature>
<feature type="binding site" evidence="1">
    <location>
        <position position="208"/>
    </location>
    <ligand>
        <name>ATP</name>
        <dbReference type="ChEBI" id="CHEBI:30616"/>
        <label>1</label>
    </ligand>
</feature>
<feature type="binding site" evidence="1">
    <location>
        <position position="210"/>
    </location>
    <ligand>
        <name>ATP</name>
        <dbReference type="ChEBI" id="CHEBI:30616"/>
        <label>1</label>
    </ligand>
</feature>
<feature type="binding site" evidence="1">
    <location>
        <position position="215"/>
    </location>
    <ligand>
        <name>ATP</name>
        <dbReference type="ChEBI" id="CHEBI:30616"/>
        <label>1</label>
    </ligand>
</feature>
<feature type="binding site" evidence="1">
    <location>
        <position position="241"/>
    </location>
    <ligand>
        <name>ATP</name>
        <dbReference type="ChEBI" id="CHEBI:30616"/>
        <label>1</label>
    </ligand>
</feature>
<feature type="binding site" evidence="1">
    <location>
        <position position="242"/>
    </location>
    <ligand>
        <name>ATP</name>
        <dbReference type="ChEBI" id="CHEBI:30616"/>
        <label>1</label>
    </ligand>
</feature>
<feature type="binding site" evidence="1">
    <location>
        <position position="243"/>
    </location>
    <ligand>
        <name>ATP</name>
        <dbReference type="ChEBI" id="CHEBI:30616"/>
        <label>1</label>
    </ligand>
</feature>
<feature type="binding site" evidence="1">
    <location>
        <position position="285"/>
    </location>
    <ligand>
        <name>ATP</name>
        <dbReference type="ChEBI" id="CHEBI:30616"/>
        <label>1</label>
    </ligand>
</feature>
<feature type="binding site" evidence="1">
    <location>
        <position position="285"/>
    </location>
    <ligand>
        <name>Mg(2+)</name>
        <dbReference type="ChEBI" id="CHEBI:18420"/>
        <label>1</label>
    </ligand>
</feature>
<feature type="binding site" evidence="1">
    <location>
        <position position="285"/>
    </location>
    <ligand>
        <name>Mn(2+)</name>
        <dbReference type="ChEBI" id="CHEBI:29035"/>
        <label>1</label>
    </ligand>
</feature>
<feature type="binding site" evidence="1">
    <location>
        <position position="299"/>
    </location>
    <ligand>
        <name>ATP</name>
        <dbReference type="ChEBI" id="CHEBI:30616"/>
        <label>1</label>
    </ligand>
</feature>
<feature type="binding site" evidence="1">
    <location>
        <position position="299"/>
    </location>
    <ligand>
        <name>Mg(2+)</name>
        <dbReference type="ChEBI" id="CHEBI:18420"/>
        <label>1</label>
    </ligand>
</feature>
<feature type="binding site" evidence="1">
    <location>
        <position position="299"/>
    </location>
    <ligand>
        <name>Mg(2+)</name>
        <dbReference type="ChEBI" id="CHEBI:18420"/>
        <label>2</label>
    </ligand>
</feature>
<feature type="binding site" evidence="1">
    <location>
        <position position="299"/>
    </location>
    <ligand>
        <name>Mn(2+)</name>
        <dbReference type="ChEBI" id="CHEBI:29035"/>
        <label>1</label>
    </ligand>
</feature>
<feature type="binding site" evidence="1">
    <location>
        <position position="299"/>
    </location>
    <ligand>
        <name>Mn(2+)</name>
        <dbReference type="ChEBI" id="CHEBI:29035"/>
        <label>2</label>
    </ligand>
</feature>
<feature type="binding site" evidence="1">
    <location>
        <position position="301"/>
    </location>
    <ligand>
        <name>Mg(2+)</name>
        <dbReference type="ChEBI" id="CHEBI:18420"/>
        <label>2</label>
    </ligand>
</feature>
<feature type="binding site" evidence="1">
    <location>
        <position position="301"/>
    </location>
    <ligand>
        <name>Mn(2+)</name>
        <dbReference type="ChEBI" id="CHEBI:29035"/>
        <label>2</label>
    </ligand>
</feature>
<feature type="binding site" evidence="1">
    <location>
        <position position="712"/>
    </location>
    <ligand>
        <name>ATP</name>
        <dbReference type="ChEBI" id="CHEBI:30616"/>
        <label>2</label>
    </ligand>
</feature>
<feature type="binding site" evidence="1">
    <location>
        <position position="754"/>
    </location>
    <ligand>
        <name>ATP</name>
        <dbReference type="ChEBI" id="CHEBI:30616"/>
        <label>2</label>
    </ligand>
</feature>
<feature type="binding site" evidence="1">
    <location>
        <position position="756"/>
    </location>
    <ligand>
        <name>ATP</name>
        <dbReference type="ChEBI" id="CHEBI:30616"/>
        <label>2</label>
    </ligand>
</feature>
<feature type="binding site" evidence="1">
    <location>
        <position position="761"/>
    </location>
    <ligand>
        <name>ATP</name>
        <dbReference type="ChEBI" id="CHEBI:30616"/>
        <label>2</label>
    </ligand>
</feature>
<feature type="binding site" evidence="1">
    <location>
        <position position="786"/>
    </location>
    <ligand>
        <name>ATP</name>
        <dbReference type="ChEBI" id="CHEBI:30616"/>
        <label>2</label>
    </ligand>
</feature>
<feature type="binding site" evidence="1">
    <location>
        <position position="787"/>
    </location>
    <ligand>
        <name>ATP</name>
        <dbReference type="ChEBI" id="CHEBI:30616"/>
        <label>2</label>
    </ligand>
</feature>
<feature type="binding site" evidence="1">
    <location>
        <position position="788"/>
    </location>
    <ligand>
        <name>ATP</name>
        <dbReference type="ChEBI" id="CHEBI:30616"/>
        <label>2</label>
    </ligand>
</feature>
<feature type="binding site" evidence="1">
    <location>
        <position position="789"/>
    </location>
    <ligand>
        <name>ATP</name>
        <dbReference type="ChEBI" id="CHEBI:30616"/>
        <label>2</label>
    </ligand>
</feature>
<feature type="binding site" evidence="1">
    <location>
        <position position="829"/>
    </location>
    <ligand>
        <name>ATP</name>
        <dbReference type="ChEBI" id="CHEBI:30616"/>
        <label>2</label>
    </ligand>
</feature>
<feature type="binding site" evidence="1">
    <location>
        <position position="829"/>
    </location>
    <ligand>
        <name>Mg(2+)</name>
        <dbReference type="ChEBI" id="CHEBI:18420"/>
        <label>3</label>
    </ligand>
</feature>
<feature type="binding site" evidence="1">
    <location>
        <position position="829"/>
    </location>
    <ligand>
        <name>Mn(2+)</name>
        <dbReference type="ChEBI" id="CHEBI:29035"/>
        <label>3</label>
    </ligand>
</feature>
<feature type="binding site" evidence="1">
    <location>
        <position position="841"/>
    </location>
    <ligand>
        <name>ATP</name>
        <dbReference type="ChEBI" id="CHEBI:30616"/>
        <label>2</label>
    </ligand>
</feature>
<feature type="binding site" evidence="1">
    <location>
        <position position="841"/>
    </location>
    <ligand>
        <name>Mg(2+)</name>
        <dbReference type="ChEBI" id="CHEBI:18420"/>
        <label>3</label>
    </ligand>
</feature>
<feature type="binding site" evidence="1">
    <location>
        <position position="841"/>
    </location>
    <ligand>
        <name>Mg(2+)</name>
        <dbReference type="ChEBI" id="CHEBI:18420"/>
        <label>4</label>
    </ligand>
</feature>
<feature type="binding site" evidence="1">
    <location>
        <position position="841"/>
    </location>
    <ligand>
        <name>Mn(2+)</name>
        <dbReference type="ChEBI" id="CHEBI:29035"/>
        <label>3</label>
    </ligand>
</feature>
<feature type="binding site" evidence="1">
    <location>
        <position position="841"/>
    </location>
    <ligand>
        <name>Mn(2+)</name>
        <dbReference type="ChEBI" id="CHEBI:29035"/>
        <label>4</label>
    </ligand>
</feature>
<feature type="binding site" evidence="1">
    <location>
        <position position="843"/>
    </location>
    <ligand>
        <name>Mg(2+)</name>
        <dbReference type="ChEBI" id="CHEBI:18420"/>
        <label>4</label>
    </ligand>
</feature>
<feature type="binding site" evidence="1">
    <location>
        <position position="843"/>
    </location>
    <ligand>
        <name>Mn(2+)</name>
        <dbReference type="ChEBI" id="CHEBI:29035"/>
        <label>4</label>
    </ligand>
</feature>
<comment type="function">
    <text evidence="1">Large subunit of the glutamine-dependent carbamoyl phosphate synthetase (CPSase). CPSase catalyzes the formation of carbamoyl phosphate from the ammonia moiety of glutamine, carbonate, and phosphate donated by ATP, constituting the first step of 2 biosynthetic pathways, one leading to arginine and/or urea and the other to pyrimidine nucleotides. The large subunit (synthetase) binds the substrates ammonia (free or transferred from glutamine from the small subunit), hydrogencarbonate and ATP and carries out an ATP-coupled ligase reaction, activating hydrogencarbonate by forming carboxy phosphate which reacts with ammonia to form carbamoyl phosphate.</text>
</comment>
<comment type="catalytic activity">
    <reaction evidence="1">
        <text>hydrogencarbonate + L-glutamine + 2 ATP + H2O = carbamoyl phosphate + L-glutamate + 2 ADP + phosphate + 2 H(+)</text>
        <dbReference type="Rhea" id="RHEA:18633"/>
        <dbReference type="ChEBI" id="CHEBI:15377"/>
        <dbReference type="ChEBI" id="CHEBI:15378"/>
        <dbReference type="ChEBI" id="CHEBI:17544"/>
        <dbReference type="ChEBI" id="CHEBI:29985"/>
        <dbReference type="ChEBI" id="CHEBI:30616"/>
        <dbReference type="ChEBI" id="CHEBI:43474"/>
        <dbReference type="ChEBI" id="CHEBI:58228"/>
        <dbReference type="ChEBI" id="CHEBI:58359"/>
        <dbReference type="ChEBI" id="CHEBI:456216"/>
        <dbReference type="EC" id="6.3.5.5"/>
    </reaction>
</comment>
<comment type="catalytic activity">
    <molecule>Carbamoyl phosphate synthase large chain</molecule>
    <reaction evidence="1">
        <text>hydrogencarbonate + NH4(+) + 2 ATP = carbamoyl phosphate + 2 ADP + phosphate + 2 H(+)</text>
        <dbReference type="Rhea" id="RHEA:18029"/>
        <dbReference type="ChEBI" id="CHEBI:15378"/>
        <dbReference type="ChEBI" id="CHEBI:17544"/>
        <dbReference type="ChEBI" id="CHEBI:28938"/>
        <dbReference type="ChEBI" id="CHEBI:30616"/>
        <dbReference type="ChEBI" id="CHEBI:43474"/>
        <dbReference type="ChEBI" id="CHEBI:58228"/>
        <dbReference type="ChEBI" id="CHEBI:456216"/>
        <dbReference type="EC" id="6.3.4.16"/>
    </reaction>
</comment>
<comment type="cofactor">
    <cofactor evidence="1">
        <name>Mg(2+)</name>
        <dbReference type="ChEBI" id="CHEBI:18420"/>
    </cofactor>
    <cofactor evidence="1">
        <name>Mn(2+)</name>
        <dbReference type="ChEBI" id="CHEBI:29035"/>
    </cofactor>
    <text evidence="1">Binds 4 Mg(2+) or Mn(2+) ions per subunit.</text>
</comment>
<comment type="pathway">
    <text evidence="1">Amino-acid biosynthesis; L-arginine biosynthesis; carbamoyl phosphate from bicarbonate: step 1/1.</text>
</comment>
<comment type="pathway">
    <text evidence="1">Pyrimidine metabolism; UMP biosynthesis via de novo pathway; (S)-dihydroorotate from bicarbonate: step 1/3.</text>
</comment>
<comment type="subunit">
    <text evidence="1">Composed of two chains; the small (or glutamine) chain promotes the hydrolysis of glutamine to ammonia, which is used by the large (or ammonia) chain to synthesize carbamoyl phosphate. Tetramer of heterodimers (alpha,beta)4.</text>
</comment>
<comment type="domain">
    <text evidence="1">The large subunit is composed of 2 ATP-grasp domains that are involved in binding the 2 ATP molecules needed for carbamoyl phosphate synthesis. The N-terminal ATP-grasp domain (referred to as the carboxyphosphate synthetic component) catalyzes the ATP-dependent phosphorylation of hydrogencarbonate to carboxyphosphate and the subsequent nucleophilic attack by ammonia to form a carbamate intermediate. The C-terminal ATP-grasp domain (referred to as the carbamoyl phosphate synthetic component) then catalyzes the phosphorylation of carbamate with the second ATP to form the end product carbamoyl phosphate. The reactive and unstable enzyme intermediates are sequentially channeled from one active site to the next through the interior of the protein over a distance of at least 96 A.</text>
</comment>
<comment type="similarity">
    <text evidence="1">Belongs to the CarB family.</text>
</comment>
<dbReference type="EC" id="6.3.4.16" evidence="1"/>
<dbReference type="EC" id="6.3.5.5" evidence="1"/>
<dbReference type="EMBL" id="AM711867">
    <property type="protein sequence ID" value="CAN01838.1"/>
    <property type="molecule type" value="Genomic_DNA"/>
</dbReference>
<dbReference type="RefSeq" id="WP_012038470.1">
    <property type="nucleotide sequence ID" value="NC_009480.1"/>
</dbReference>
<dbReference type="SMR" id="A5CRX5"/>
<dbReference type="KEGG" id="cmi:CMM_1782"/>
<dbReference type="eggNOG" id="COG0458">
    <property type="taxonomic scope" value="Bacteria"/>
</dbReference>
<dbReference type="HOGENOM" id="CLU_000513_1_0_11"/>
<dbReference type="OrthoDB" id="9804197at2"/>
<dbReference type="UniPathway" id="UPA00068">
    <property type="reaction ID" value="UER00171"/>
</dbReference>
<dbReference type="UniPathway" id="UPA00070">
    <property type="reaction ID" value="UER00115"/>
</dbReference>
<dbReference type="Proteomes" id="UP000001564">
    <property type="component" value="Chromosome"/>
</dbReference>
<dbReference type="GO" id="GO:0005737">
    <property type="term" value="C:cytoplasm"/>
    <property type="evidence" value="ECO:0007669"/>
    <property type="project" value="TreeGrafter"/>
</dbReference>
<dbReference type="GO" id="GO:0005524">
    <property type="term" value="F:ATP binding"/>
    <property type="evidence" value="ECO:0007669"/>
    <property type="project" value="UniProtKB-UniRule"/>
</dbReference>
<dbReference type="GO" id="GO:0004087">
    <property type="term" value="F:carbamoyl-phosphate synthase (ammonia) activity"/>
    <property type="evidence" value="ECO:0007669"/>
    <property type="project" value="RHEA"/>
</dbReference>
<dbReference type="GO" id="GO:0004088">
    <property type="term" value="F:carbamoyl-phosphate synthase (glutamine-hydrolyzing) activity"/>
    <property type="evidence" value="ECO:0007669"/>
    <property type="project" value="UniProtKB-UniRule"/>
</dbReference>
<dbReference type="GO" id="GO:0046872">
    <property type="term" value="F:metal ion binding"/>
    <property type="evidence" value="ECO:0007669"/>
    <property type="project" value="UniProtKB-KW"/>
</dbReference>
<dbReference type="GO" id="GO:0044205">
    <property type="term" value="P:'de novo' UMP biosynthetic process"/>
    <property type="evidence" value="ECO:0007669"/>
    <property type="project" value="UniProtKB-UniRule"/>
</dbReference>
<dbReference type="GO" id="GO:0006541">
    <property type="term" value="P:glutamine metabolic process"/>
    <property type="evidence" value="ECO:0007669"/>
    <property type="project" value="TreeGrafter"/>
</dbReference>
<dbReference type="GO" id="GO:0006526">
    <property type="term" value="P:L-arginine biosynthetic process"/>
    <property type="evidence" value="ECO:0007669"/>
    <property type="project" value="UniProtKB-UniRule"/>
</dbReference>
<dbReference type="CDD" id="cd01424">
    <property type="entry name" value="MGS_CPS_II"/>
    <property type="match status" value="1"/>
</dbReference>
<dbReference type="FunFam" id="1.10.1030.10:FF:000002">
    <property type="entry name" value="Carbamoyl-phosphate synthase large chain"/>
    <property type="match status" value="1"/>
</dbReference>
<dbReference type="FunFam" id="3.30.470.20:FF:000007">
    <property type="entry name" value="Carbamoyl-phosphate synthase large chain"/>
    <property type="match status" value="1"/>
</dbReference>
<dbReference type="FunFam" id="3.30.470.20:FF:000014">
    <property type="entry name" value="Carbamoyl-phosphate synthase large chain"/>
    <property type="match status" value="1"/>
</dbReference>
<dbReference type="FunFam" id="3.40.50.20:FF:000001">
    <property type="entry name" value="Carbamoyl-phosphate synthase large chain"/>
    <property type="match status" value="1"/>
</dbReference>
<dbReference type="FunFam" id="3.40.50.20:FF:000003">
    <property type="entry name" value="Carbamoyl-phosphate synthase large chain"/>
    <property type="match status" value="1"/>
</dbReference>
<dbReference type="Gene3D" id="3.40.50.20">
    <property type="match status" value="2"/>
</dbReference>
<dbReference type="Gene3D" id="3.30.1490.20">
    <property type="entry name" value="ATP-grasp fold, A domain"/>
    <property type="match status" value="1"/>
</dbReference>
<dbReference type="Gene3D" id="3.30.470.20">
    <property type="entry name" value="ATP-grasp fold, B domain"/>
    <property type="match status" value="2"/>
</dbReference>
<dbReference type="Gene3D" id="1.10.1030.10">
    <property type="entry name" value="Carbamoyl-phosphate synthetase, large subunit oligomerisation domain"/>
    <property type="match status" value="1"/>
</dbReference>
<dbReference type="Gene3D" id="3.40.50.1380">
    <property type="entry name" value="Methylglyoxal synthase-like domain"/>
    <property type="match status" value="1"/>
</dbReference>
<dbReference type="HAMAP" id="MF_01210_B">
    <property type="entry name" value="CPSase_L_chain_B"/>
    <property type="match status" value="1"/>
</dbReference>
<dbReference type="InterPro" id="IPR011761">
    <property type="entry name" value="ATP-grasp"/>
</dbReference>
<dbReference type="InterPro" id="IPR013815">
    <property type="entry name" value="ATP_grasp_subdomain_1"/>
</dbReference>
<dbReference type="InterPro" id="IPR006275">
    <property type="entry name" value="CarbamoylP_synth_lsu"/>
</dbReference>
<dbReference type="InterPro" id="IPR005480">
    <property type="entry name" value="CarbamoylP_synth_lsu_oligo"/>
</dbReference>
<dbReference type="InterPro" id="IPR036897">
    <property type="entry name" value="CarbamoylP_synth_lsu_oligo_sf"/>
</dbReference>
<dbReference type="InterPro" id="IPR005479">
    <property type="entry name" value="CbamoylP_synth_lsu-like_ATP-bd"/>
</dbReference>
<dbReference type="InterPro" id="IPR005483">
    <property type="entry name" value="CbamoylP_synth_lsu_CPSase_dom"/>
</dbReference>
<dbReference type="InterPro" id="IPR011607">
    <property type="entry name" value="MGS-like_dom"/>
</dbReference>
<dbReference type="InterPro" id="IPR036914">
    <property type="entry name" value="MGS-like_dom_sf"/>
</dbReference>
<dbReference type="InterPro" id="IPR033937">
    <property type="entry name" value="MGS_CPS_CarB"/>
</dbReference>
<dbReference type="InterPro" id="IPR016185">
    <property type="entry name" value="PreATP-grasp_dom_sf"/>
</dbReference>
<dbReference type="NCBIfam" id="TIGR01369">
    <property type="entry name" value="CPSaseII_lrg"/>
    <property type="match status" value="1"/>
</dbReference>
<dbReference type="NCBIfam" id="NF003671">
    <property type="entry name" value="PRK05294.1"/>
    <property type="match status" value="1"/>
</dbReference>
<dbReference type="NCBIfam" id="NF009455">
    <property type="entry name" value="PRK12815.1"/>
    <property type="match status" value="1"/>
</dbReference>
<dbReference type="PANTHER" id="PTHR11405:SF53">
    <property type="entry name" value="CARBAMOYL-PHOSPHATE SYNTHASE [AMMONIA], MITOCHONDRIAL"/>
    <property type="match status" value="1"/>
</dbReference>
<dbReference type="PANTHER" id="PTHR11405">
    <property type="entry name" value="CARBAMOYLTRANSFERASE FAMILY MEMBER"/>
    <property type="match status" value="1"/>
</dbReference>
<dbReference type="Pfam" id="PF02786">
    <property type="entry name" value="CPSase_L_D2"/>
    <property type="match status" value="2"/>
</dbReference>
<dbReference type="Pfam" id="PF02787">
    <property type="entry name" value="CPSase_L_D3"/>
    <property type="match status" value="1"/>
</dbReference>
<dbReference type="Pfam" id="PF02142">
    <property type="entry name" value="MGS"/>
    <property type="match status" value="1"/>
</dbReference>
<dbReference type="PRINTS" id="PR00098">
    <property type="entry name" value="CPSASE"/>
</dbReference>
<dbReference type="SMART" id="SM01096">
    <property type="entry name" value="CPSase_L_D3"/>
    <property type="match status" value="1"/>
</dbReference>
<dbReference type="SMART" id="SM00851">
    <property type="entry name" value="MGS"/>
    <property type="match status" value="1"/>
</dbReference>
<dbReference type="SUPFAM" id="SSF48108">
    <property type="entry name" value="Carbamoyl phosphate synthetase, large subunit connection domain"/>
    <property type="match status" value="1"/>
</dbReference>
<dbReference type="SUPFAM" id="SSF56059">
    <property type="entry name" value="Glutathione synthetase ATP-binding domain-like"/>
    <property type="match status" value="2"/>
</dbReference>
<dbReference type="SUPFAM" id="SSF52335">
    <property type="entry name" value="Methylglyoxal synthase-like"/>
    <property type="match status" value="1"/>
</dbReference>
<dbReference type="SUPFAM" id="SSF52440">
    <property type="entry name" value="PreATP-grasp domain"/>
    <property type="match status" value="2"/>
</dbReference>
<dbReference type="PROSITE" id="PS50975">
    <property type="entry name" value="ATP_GRASP"/>
    <property type="match status" value="2"/>
</dbReference>
<dbReference type="PROSITE" id="PS00866">
    <property type="entry name" value="CPSASE_1"/>
    <property type="match status" value="2"/>
</dbReference>
<dbReference type="PROSITE" id="PS00867">
    <property type="entry name" value="CPSASE_2"/>
    <property type="match status" value="2"/>
</dbReference>
<dbReference type="PROSITE" id="PS51855">
    <property type="entry name" value="MGS"/>
    <property type="match status" value="1"/>
</dbReference>
<evidence type="ECO:0000255" key="1">
    <source>
        <dbReference type="HAMAP-Rule" id="MF_01210"/>
    </source>
</evidence>
<protein>
    <recommendedName>
        <fullName evidence="1">Carbamoyl phosphate synthase large chain</fullName>
        <ecNumber evidence="1">6.3.4.16</ecNumber>
        <ecNumber evidence="1">6.3.5.5</ecNumber>
    </recommendedName>
    <alternativeName>
        <fullName evidence="1">Carbamoyl phosphate synthetase ammonia chain</fullName>
    </alternativeName>
</protein>
<organism>
    <name type="scientific">Clavibacter michiganensis subsp. michiganensis (strain NCPPB 382)</name>
    <dbReference type="NCBI Taxonomy" id="443906"/>
    <lineage>
        <taxon>Bacteria</taxon>
        <taxon>Bacillati</taxon>
        <taxon>Actinomycetota</taxon>
        <taxon>Actinomycetes</taxon>
        <taxon>Micrococcales</taxon>
        <taxon>Microbacteriaceae</taxon>
        <taxon>Clavibacter</taxon>
    </lineage>
</organism>
<sequence>MPKRDDINSVLVIGSGPIVIGQAAEFDYSGTQACRVLREEGVRVILVNSNPATIMTDPGFADATYIEPITSEVLEKIIIKERPDAVLPTLGGQTALNAAIRLDELGILAKHGVELIGAKVEAIQKGEDRQLFKDLVIESGADVARSHVAKTLEQAVEFAEDLGYPLVIRPSFTMGGLGSGFAHTRQELERMVADGLQSSPTTEVLLEESILGWKEYELELMRDTADNTVVVCSIENVDPVGVHTGDSITVAPALTLTDREYQHMRDIGIDIIRRVGVDTGGCNIQFAVDPADGRLIVIEMNPRVSRSSALASKATGFPIAKIAAKLAIGYRLDEIPNDITKVTPASFEPTLDYVVVKVPRFAFEKFPAADAELTTTMKSVGEAMAIGRNYSTALQKALRSLEKRGSSFHWGPESRSVDELLETSRTPTDGRIVTVQQALRAGATAEQVFDATKIDPWFIDQIVLINEVADAVRDADELDAETLREAKDHGFSDAQIAEIRGLVEQEVRDARHAADIRPVYKTVDTCAGEFPALTPYHYSSYDSETEIVPSDRRKVIILGSGPNRIGQGIEFDYSCVHASFALADAGYETIMINCNPETVSTDYDTSDRLYFEPLTLEDVLEIVHVEQQAGELVGVVVQLGGQTALGLAKGLEAAGVPILGTSPSAIDLAEERGLFSGILDTAGLVAPRNGTAVAIDEAVVVAEGIGYPVLVRPSYVLGGRGMEIVFDTATLHDYFLRMADQGIIGEGKPLLIDRFLDDAIEIDIDAIYDGTELYVGGVMEHIEEAGIHSGDSSCTLPPVTLGRGQIQQVVDAARAIAEGVGVRGLLNVQFAIGAGVLYVLEANPRASRTVPFVSKALGIPLAKAASLVMVGTSIAELKASGLLPERDGSDVPMDSPVAVKEAVLPFKRFRTKDGLIVDSVLGPEMRSTGEVMGIDRDFPRAFAKSQEAAFGGLPLSGTVFVSVADRDKRSIVLPVLRLQQLGFEVLATAGTAEILSRNGIQARVVRKYSEEPAAGDSPSIVDLINRDEVDVVINTPSGRTARADGYEIRAAAVAADKALFTTIAQLTAAVASFDAIRAGFDVTSLQDYAIAREARR</sequence>